<proteinExistence type="inferred from homology"/>
<reference key="1">
    <citation type="submission" date="2007-10" db="EMBL/GenBank/DDBJ databases">
        <title>Brucella canis ATCC 23365 whole genome shotgun sequencing project.</title>
        <authorList>
            <person name="Setubal J.C."/>
            <person name="Bowns C."/>
            <person name="Boyle S."/>
            <person name="Crasta O.R."/>
            <person name="Czar M.J."/>
            <person name="Dharmanolla C."/>
            <person name="Gillespie J.J."/>
            <person name="Kenyon R.W."/>
            <person name="Lu J."/>
            <person name="Mane S."/>
            <person name="Mohapatra S."/>
            <person name="Nagrani S."/>
            <person name="Purkayastha A."/>
            <person name="Rajasimha H.K."/>
            <person name="Shallom J.M."/>
            <person name="Shallom S."/>
            <person name="Shukla M."/>
            <person name="Snyder E.E."/>
            <person name="Sobral B.W."/>
            <person name="Wattam A.R."/>
            <person name="Will R."/>
            <person name="Williams K."/>
            <person name="Yoo H."/>
            <person name="Bruce D."/>
            <person name="Detter C."/>
            <person name="Munk C."/>
            <person name="Brettin T.S."/>
        </authorList>
    </citation>
    <scope>NUCLEOTIDE SEQUENCE [LARGE SCALE GENOMIC DNA]</scope>
    <source>
        <strain>ATCC 23365 / NCTC 10854 / RM-666</strain>
    </source>
</reference>
<evidence type="ECO:0000255" key="1">
    <source>
        <dbReference type="HAMAP-Rule" id="MF_00443"/>
    </source>
</evidence>
<comment type="function">
    <text evidence="1">Catalyzes the rearrangement of 1-deoxy-D-xylulose 5-phosphate (DXP) to produce the thiazole phosphate moiety of thiamine. Sulfur is provided by the thiocarboxylate moiety of the carrier protein ThiS. In vitro, sulfur can be provided by H(2)S.</text>
</comment>
<comment type="catalytic activity">
    <reaction evidence="1">
        <text>[ThiS sulfur-carrier protein]-C-terminal-Gly-aminoethanethioate + 2-iminoacetate + 1-deoxy-D-xylulose 5-phosphate = [ThiS sulfur-carrier protein]-C-terminal Gly-Gly + 2-[(2R,5Z)-2-carboxy-4-methylthiazol-5(2H)-ylidene]ethyl phosphate + 2 H2O + H(+)</text>
        <dbReference type="Rhea" id="RHEA:26297"/>
        <dbReference type="Rhea" id="RHEA-COMP:12909"/>
        <dbReference type="Rhea" id="RHEA-COMP:19908"/>
        <dbReference type="ChEBI" id="CHEBI:15377"/>
        <dbReference type="ChEBI" id="CHEBI:15378"/>
        <dbReference type="ChEBI" id="CHEBI:57792"/>
        <dbReference type="ChEBI" id="CHEBI:62899"/>
        <dbReference type="ChEBI" id="CHEBI:77846"/>
        <dbReference type="ChEBI" id="CHEBI:90778"/>
        <dbReference type="ChEBI" id="CHEBI:232372"/>
        <dbReference type="EC" id="2.8.1.10"/>
    </reaction>
</comment>
<comment type="pathway">
    <text evidence="1">Cofactor biosynthesis; thiamine diphosphate biosynthesis.</text>
</comment>
<comment type="subunit">
    <text evidence="1">Homotetramer. Forms heterodimers with either ThiH or ThiS.</text>
</comment>
<comment type="subcellular location">
    <subcellularLocation>
        <location evidence="1">Cytoplasm</location>
    </subcellularLocation>
</comment>
<comment type="similarity">
    <text evidence="1">Belongs to the ThiG family.</text>
</comment>
<feature type="chain" id="PRO_1000080865" description="Thiazole synthase">
    <location>
        <begin position="1"/>
        <end position="256"/>
    </location>
</feature>
<feature type="active site" description="Schiff-base intermediate with DXP" evidence="1">
    <location>
        <position position="96"/>
    </location>
</feature>
<feature type="binding site" evidence="1">
    <location>
        <position position="157"/>
    </location>
    <ligand>
        <name>1-deoxy-D-xylulose 5-phosphate</name>
        <dbReference type="ChEBI" id="CHEBI:57792"/>
    </ligand>
</feature>
<feature type="binding site" evidence="1">
    <location>
        <begin position="184"/>
        <end position="185"/>
    </location>
    <ligand>
        <name>1-deoxy-D-xylulose 5-phosphate</name>
        <dbReference type="ChEBI" id="CHEBI:57792"/>
    </ligand>
</feature>
<feature type="binding site" evidence="1">
    <location>
        <begin position="206"/>
        <end position="207"/>
    </location>
    <ligand>
        <name>1-deoxy-D-xylulose 5-phosphate</name>
        <dbReference type="ChEBI" id="CHEBI:57792"/>
    </ligand>
</feature>
<accession>A9M7F3</accession>
<dbReference type="EC" id="2.8.1.10" evidence="1"/>
<dbReference type="EMBL" id="CP000872">
    <property type="protein sequence ID" value="ABX61312.1"/>
    <property type="molecule type" value="Genomic_DNA"/>
</dbReference>
<dbReference type="RefSeq" id="WP_004691411.1">
    <property type="nucleotide sequence ID" value="NC_010103.1"/>
</dbReference>
<dbReference type="SMR" id="A9M7F3"/>
<dbReference type="GeneID" id="55589998"/>
<dbReference type="KEGG" id="bcs:BCAN_A0217"/>
<dbReference type="HOGENOM" id="CLU_062233_1_0_5"/>
<dbReference type="PhylomeDB" id="A9M7F3"/>
<dbReference type="UniPathway" id="UPA00060"/>
<dbReference type="Proteomes" id="UP000001385">
    <property type="component" value="Chromosome I"/>
</dbReference>
<dbReference type="GO" id="GO:0005737">
    <property type="term" value="C:cytoplasm"/>
    <property type="evidence" value="ECO:0007669"/>
    <property type="project" value="UniProtKB-SubCell"/>
</dbReference>
<dbReference type="GO" id="GO:1990107">
    <property type="term" value="F:thiazole synthase activity"/>
    <property type="evidence" value="ECO:0007669"/>
    <property type="project" value="UniProtKB-EC"/>
</dbReference>
<dbReference type="GO" id="GO:0009229">
    <property type="term" value="P:thiamine diphosphate biosynthetic process"/>
    <property type="evidence" value="ECO:0007669"/>
    <property type="project" value="UniProtKB-UniRule"/>
</dbReference>
<dbReference type="CDD" id="cd04728">
    <property type="entry name" value="ThiG"/>
    <property type="match status" value="1"/>
</dbReference>
<dbReference type="Gene3D" id="3.20.20.70">
    <property type="entry name" value="Aldolase class I"/>
    <property type="match status" value="1"/>
</dbReference>
<dbReference type="HAMAP" id="MF_00443">
    <property type="entry name" value="ThiG"/>
    <property type="match status" value="1"/>
</dbReference>
<dbReference type="InterPro" id="IPR013785">
    <property type="entry name" value="Aldolase_TIM"/>
</dbReference>
<dbReference type="InterPro" id="IPR033983">
    <property type="entry name" value="Thiazole_synthase_ThiG"/>
</dbReference>
<dbReference type="InterPro" id="IPR008867">
    <property type="entry name" value="ThiG"/>
</dbReference>
<dbReference type="PANTHER" id="PTHR34266">
    <property type="entry name" value="THIAZOLE SYNTHASE"/>
    <property type="match status" value="1"/>
</dbReference>
<dbReference type="PANTHER" id="PTHR34266:SF2">
    <property type="entry name" value="THIAZOLE SYNTHASE"/>
    <property type="match status" value="1"/>
</dbReference>
<dbReference type="Pfam" id="PF05690">
    <property type="entry name" value="ThiG"/>
    <property type="match status" value="1"/>
</dbReference>
<dbReference type="SUPFAM" id="SSF110399">
    <property type="entry name" value="ThiG-like"/>
    <property type="match status" value="1"/>
</dbReference>
<gene>
    <name evidence="1" type="primary">thiG</name>
    <name type="ordered locus">BCAN_A0217</name>
</gene>
<keyword id="KW-0963">Cytoplasm</keyword>
<keyword id="KW-1185">Reference proteome</keyword>
<keyword id="KW-0704">Schiff base</keyword>
<keyword id="KW-0784">Thiamine biosynthesis</keyword>
<keyword id="KW-0808">Transferase</keyword>
<protein>
    <recommendedName>
        <fullName evidence="1">Thiazole synthase</fullName>
        <ecNumber evidence="1">2.8.1.10</ecNumber>
    </recommendedName>
</protein>
<sequence length="256" mass="27351">MLEFYGKRFESRLLLGTAQYPSPSILADAVRASLSRIVTVSLRRESGEARAGQDFWALIKALGVAVLPNTAGCHTPREAITTAHMAREVFGTNWIKLEVIGDTDTLQPDPFGLVEAARILCDESFEVFPYMNDDLIVAERLIEAGCKVLMPWGAPIGSGRGLNNPYALKTMRAHFPDIPLVVDAGIGVPSHAAAAMELGFDAVLINTAVAKAGDPAAMARAFALAVEAGRLAYEADPIEARDMASPSTPLLGKAFL</sequence>
<name>THIG_BRUC2</name>
<organism>
    <name type="scientific">Brucella canis (strain ATCC 23365 / NCTC 10854 / RM-666)</name>
    <dbReference type="NCBI Taxonomy" id="483179"/>
    <lineage>
        <taxon>Bacteria</taxon>
        <taxon>Pseudomonadati</taxon>
        <taxon>Pseudomonadota</taxon>
        <taxon>Alphaproteobacteria</taxon>
        <taxon>Hyphomicrobiales</taxon>
        <taxon>Brucellaceae</taxon>
        <taxon>Brucella/Ochrobactrum group</taxon>
        <taxon>Brucella</taxon>
    </lineage>
</organism>